<proteinExistence type="inferred from homology"/>
<gene>
    <name type="primary">gpaE</name>
    <name type="ORF">DDB_G0286185</name>
</gene>
<keyword id="KW-0342">GTP-binding</keyword>
<keyword id="KW-0449">Lipoprotein</keyword>
<keyword id="KW-0460">Magnesium</keyword>
<keyword id="KW-0479">Metal-binding</keyword>
<keyword id="KW-0519">Myristate</keyword>
<keyword id="KW-0547">Nucleotide-binding</keyword>
<keyword id="KW-0564">Palmitate</keyword>
<keyword id="KW-1185">Reference proteome</keyword>
<keyword id="KW-0807">Transducer</keyword>
<accession>P34043</accession>
<accession>Q54M32</accession>
<reference key="1">
    <citation type="journal article" date="1996" name="Development">
        <title>Mutations in the Dictyostelium heterotrimeric G protein alpha subunit G alpha5 alter the kinetics of tip morphogenesis.</title>
        <authorList>
            <person name="Hadwiger J.A."/>
            <person name="Natarajan K."/>
            <person name="Firtel R.A."/>
        </authorList>
    </citation>
    <scope>NUCLEOTIDE SEQUENCE [GENOMIC DNA]</scope>
</reference>
<reference key="2">
    <citation type="journal article" date="2005" name="Nature">
        <title>The genome of the social amoeba Dictyostelium discoideum.</title>
        <authorList>
            <person name="Eichinger L."/>
            <person name="Pachebat J.A."/>
            <person name="Gloeckner G."/>
            <person name="Rajandream M.A."/>
            <person name="Sucgang R."/>
            <person name="Berriman M."/>
            <person name="Song J."/>
            <person name="Olsen R."/>
            <person name="Szafranski K."/>
            <person name="Xu Q."/>
            <person name="Tunggal B."/>
            <person name="Kummerfeld S."/>
            <person name="Madera M."/>
            <person name="Konfortov B.A."/>
            <person name="Rivero F."/>
            <person name="Bankier A.T."/>
            <person name="Lehmann R."/>
            <person name="Hamlin N."/>
            <person name="Davies R."/>
            <person name="Gaudet P."/>
            <person name="Fey P."/>
            <person name="Pilcher K."/>
            <person name="Chen G."/>
            <person name="Saunders D."/>
            <person name="Sodergren E.J."/>
            <person name="Davis P."/>
            <person name="Kerhornou A."/>
            <person name="Nie X."/>
            <person name="Hall N."/>
            <person name="Anjard C."/>
            <person name="Hemphill L."/>
            <person name="Bason N."/>
            <person name="Farbrother P."/>
            <person name="Desany B."/>
            <person name="Just E."/>
            <person name="Morio T."/>
            <person name="Rost R."/>
            <person name="Churcher C.M."/>
            <person name="Cooper J."/>
            <person name="Haydock S."/>
            <person name="van Driessche N."/>
            <person name="Cronin A."/>
            <person name="Goodhead I."/>
            <person name="Muzny D.M."/>
            <person name="Mourier T."/>
            <person name="Pain A."/>
            <person name="Lu M."/>
            <person name="Harper D."/>
            <person name="Lindsay R."/>
            <person name="Hauser H."/>
            <person name="James K.D."/>
            <person name="Quiles M."/>
            <person name="Madan Babu M."/>
            <person name="Saito T."/>
            <person name="Buchrieser C."/>
            <person name="Wardroper A."/>
            <person name="Felder M."/>
            <person name="Thangavelu M."/>
            <person name="Johnson D."/>
            <person name="Knights A."/>
            <person name="Loulseged H."/>
            <person name="Mungall K.L."/>
            <person name="Oliver K."/>
            <person name="Price C."/>
            <person name="Quail M.A."/>
            <person name="Urushihara H."/>
            <person name="Hernandez J."/>
            <person name="Rabbinowitsch E."/>
            <person name="Steffen D."/>
            <person name="Sanders M."/>
            <person name="Ma J."/>
            <person name="Kohara Y."/>
            <person name="Sharp S."/>
            <person name="Simmonds M.N."/>
            <person name="Spiegler S."/>
            <person name="Tivey A."/>
            <person name="Sugano S."/>
            <person name="White B."/>
            <person name="Walker D."/>
            <person name="Woodward J.R."/>
            <person name="Winckler T."/>
            <person name="Tanaka Y."/>
            <person name="Shaulsky G."/>
            <person name="Schleicher M."/>
            <person name="Weinstock G.M."/>
            <person name="Rosenthal A."/>
            <person name="Cox E.C."/>
            <person name="Chisholm R.L."/>
            <person name="Gibbs R.A."/>
            <person name="Loomis W.F."/>
            <person name="Platzer M."/>
            <person name="Kay R.R."/>
            <person name="Williams J.G."/>
            <person name="Dear P.H."/>
            <person name="Noegel A.A."/>
            <person name="Barrell B.G."/>
            <person name="Kuspa A."/>
        </authorList>
    </citation>
    <scope>NUCLEOTIDE SEQUENCE [LARGE SCALE GENOMIC DNA]</scope>
    <source>
        <strain>AX4</strain>
    </source>
</reference>
<reference key="3">
    <citation type="journal article" date="1991" name="Proc. Natl. Acad. Sci. U.S.A.">
        <title>Identification of Dictyostelium G alpha genes expressed during multicellular development.</title>
        <authorList>
            <person name="Hadwiger J.A."/>
            <person name="Wilkie T.M."/>
            <person name="Strathmann M."/>
            <person name="Firtel R.A."/>
        </authorList>
    </citation>
    <scope>NUCLEOTIDE SEQUENCE [GENOMIC DNA] OF 205-322</scope>
</reference>
<name>GPA5_DICDI</name>
<organism>
    <name type="scientific">Dictyostelium discoideum</name>
    <name type="common">Social amoeba</name>
    <dbReference type="NCBI Taxonomy" id="44689"/>
    <lineage>
        <taxon>Eukaryota</taxon>
        <taxon>Amoebozoa</taxon>
        <taxon>Evosea</taxon>
        <taxon>Eumycetozoa</taxon>
        <taxon>Dictyostelia</taxon>
        <taxon>Dictyosteliales</taxon>
        <taxon>Dictyosteliaceae</taxon>
        <taxon>Dictyostelium</taxon>
    </lineage>
</organism>
<comment type="function">
    <text>Guanine nucleotide-binding proteins (G proteins) are involved as modulators or transducers in various transmembrane signaling systems.</text>
</comment>
<comment type="subunit">
    <text>G proteins are composed of 3 units; alpha, beta and gamma. The alpha chain contains the guanine nucleotide binding site.</text>
</comment>
<comment type="similarity">
    <text evidence="4">Belongs to the G-alpha family. G(q) subfamily.</text>
</comment>
<protein>
    <recommendedName>
        <fullName>Guanine nucleotide-binding protein alpha-5 subunit</fullName>
        <shortName>G alpha-5</shortName>
    </recommendedName>
</protein>
<evidence type="ECO:0000250" key="1"/>
<evidence type="ECO:0000255" key="2"/>
<evidence type="ECO:0000255" key="3">
    <source>
        <dbReference type="PROSITE-ProRule" id="PRU01230"/>
    </source>
</evidence>
<evidence type="ECO:0000305" key="4"/>
<feature type="initiator methionine" description="Removed" evidence="2">
    <location>
        <position position="1"/>
    </location>
</feature>
<feature type="chain" id="PRO_0000203663" description="Guanine nucleotide-binding protein alpha-5 subunit">
    <location>
        <begin position="2"/>
        <end position="347"/>
    </location>
</feature>
<feature type="domain" description="G-alpha" evidence="3">
    <location>
        <begin position="27"/>
        <end position="347"/>
    </location>
</feature>
<feature type="region of interest" description="G1 motif" evidence="3">
    <location>
        <begin position="30"/>
        <end position="43"/>
    </location>
</feature>
<feature type="region of interest" description="G2 motif" evidence="3">
    <location>
        <begin position="168"/>
        <end position="176"/>
    </location>
</feature>
<feature type="region of interest" description="G3 motif" evidence="3">
    <location>
        <begin position="191"/>
        <end position="200"/>
    </location>
</feature>
<feature type="region of interest" description="G4 motif" evidence="3">
    <location>
        <begin position="260"/>
        <end position="267"/>
    </location>
</feature>
<feature type="region of interest" description="G5 motif" evidence="3">
    <location>
        <begin position="317"/>
        <end position="322"/>
    </location>
</feature>
<feature type="binding site" evidence="1">
    <location>
        <begin position="35"/>
        <end position="42"/>
    </location>
    <ligand>
        <name>GTP</name>
        <dbReference type="ChEBI" id="CHEBI:37565"/>
    </ligand>
</feature>
<feature type="binding site" evidence="1">
    <location>
        <position position="42"/>
    </location>
    <ligand>
        <name>Mg(2+)</name>
        <dbReference type="ChEBI" id="CHEBI:18420"/>
    </ligand>
</feature>
<feature type="binding site" evidence="1">
    <location>
        <begin position="170"/>
        <end position="176"/>
    </location>
    <ligand>
        <name>GTP</name>
        <dbReference type="ChEBI" id="CHEBI:37565"/>
    </ligand>
</feature>
<feature type="binding site" evidence="1">
    <location>
        <position position="176"/>
    </location>
    <ligand>
        <name>Mg(2+)</name>
        <dbReference type="ChEBI" id="CHEBI:18420"/>
    </ligand>
</feature>
<feature type="binding site" evidence="1">
    <location>
        <begin position="195"/>
        <end position="199"/>
    </location>
    <ligand>
        <name>GTP</name>
        <dbReference type="ChEBI" id="CHEBI:37565"/>
    </ligand>
</feature>
<feature type="binding site" evidence="1">
    <location>
        <begin position="264"/>
        <end position="267"/>
    </location>
    <ligand>
        <name>GTP</name>
        <dbReference type="ChEBI" id="CHEBI:37565"/>
    </ligand>
</feature>
<feature type="binding site" evidence="1">
    <location>
        <position position="319"/>
    </location>
    <ligand>
        <name>GTP</name>
        <dbReference type="ChEBI" id="CHEBI:37565"/>
    </ligand>
</feature>
<feature type="lipid moiety-binding region" description="N-myristoyl glycine" evidence="2">
    <location>
        <position position="2"/>
    </location>
</feature>
<feature type="lipid moiety-binding region" description="S-palmitoyl cysteine" evidence="2">
    <location>
        <position position="3"/>
    </location>
</feature>
<feature type="sequence conflict" description="In Ref. 3." evidence="4" ref="3">
    <original>IVNSHWFRNTAFIIFF</original>
    <variation>LLIVIGLEIQHSLYFL</variation>
    <location>
        <begin position="248"/>
        <end position="263"/>
    </location>
</feature>
<feature type="sequence conflict" description="In Ref. 3." evidence="4" ref="3">
    <original>A</original>
    <variation>R</variation>
    <location>
        <position position="274"/>
    </location>
</feature>
<feature type="sequence conflict" description="In Ref. 3." evidence="4" ref="3">
    <original>AYT</original>
    <variation>VYP</variation>
    <location>
        <begin position="284"/>
        <end position="286"/>
    </location>
</feature>
<feature type="sequence conflict" description="In Ref. 3." evidence="4" ref="3">
    <original>K</original>
    <variation>N</variation>
    <location>
        <position position="299"/>
    </location>
</feature>
<feature type="sequence conflict" description="In Ref. 3." evidence="4" ref="3">
    <original>N</original>
    <variation>S</variation>
    <location>
        <position position="309"/>
    </location>
</feature>
<feature type="sequence conflict" description="In Ref. 3." evidence="4" ref="3">
    <original>I</original>
    <variation>T</variation>
    <location>
        <position position="320"/>
    </location>
</feature>
<dbReference type="EMBL" id="U20806">
    <property type="protein sequence ID" value="AAB04097.1"/>
    <property type="molecule type" value="Genomic_DNA"/>
</dbReference>
<dbReference type="EMBL" id="AAFI02000085">
    <property type="protein sequence ID" value="EAL64268.1"/>
    <property type="molecule type" value="Genomic_DNA"/>
</dbReference>
<dbReference type="PIR" id="B40990">
    <property type="entry name" value="B40990"/>
</dbReference>
<dbReference type="RefSeq" id="XP_637799.1">
    <property type="nucleotide sequence ID" value="XM_632707.1"/>
</dbReference>
<dbReference type="SMR" id="P34043"/>
<dbReference type="FunCoup" id="P34043">
    <property type="interactions" value="6"/>
</dbReference>
<dbReference type="STRING" id="44689.P34043"/>
<dbReference type="PaxDb" id="44689-DDB0191246"/>
<dbReference type="EnsemblProtists" id="EAL64268">
    <property type="protein sequence ID" value="EAL64268"/>
    <property type="gene ID" value="DDB_G0286185"/>
</dbReference>
<dbReference type="GeneID" id="8625513"/>
<dbReference type="KEGG" id="ddi:DDB_G0286185"/>
<dbReference type="dictyBase" id="DDB_G0286185">
    <property type="gene designation" value="gpaE"/>
</dbReference>
<dbReference type="VEuPathDB" id="AmoebaDB:DDB_G0286185"/>
<dbReference type="eggNOG" id="KOG0082">
    <property type="taxonomic scope" value="Eukaryota"/>
</dbReference>
<dbReference type="HOGENOM" id="CLU_014184_6_0_1"/>
<dbReference type="InParanoid" id="P34043"/>
<dbReference type="OMA" id="GNCISQM"/>
<dbReference type="PhylomeDB" id="P34043"/>
<dbReference type="Reactome" id="R-DDI-112043">
    <property type="pathway name" value="PLC beta mediated events"/>
</dbReference>
<dbReference type="Reactome" id="R-DDI-170660">
    <property type="pathway name" value="Adenylate cyclase activating pathway"/>
</dbReference>
<dbReference type="Reactome" id="R-DDI-170670">
    <property type="pathway name" value="Adenylate cyclase inhibitory pathway"/>
</dbReference>
<dbReference type="Reactome" id="R-DDI-202040">
    <property type="pathway name" value="G-protein activation"/>
</dbReference>
<dbReference type="Reactome" id="R-DDI-399997">
    <property type="pathway name" value="Acetylcholine regulates insulin secretion"/>
</dbReference>
<dbReference type="Reactome" id="R-DDI-416476">
    <property type="pathway name" value="G alpha (q) signalling events"/>
</dbReference>
<dbReference type="Reactome" id="R-DDI-416482">
    <property type="pathway name" value="G alpha (12/13) signalling events"/>
</dbReference>
<dbReference type="Reactome" id="R-DDI-418592">
    <property type="pathway name" value="ADP signalling through P2Y purinoceptor 1"/>
</dbReference>
<dbReference type="Reactome" id="R-DDI-434316">
    <property type="pathway name" value="Fatty Acids bound to GPR40 (FFAR1) regulate insulin secretion"/>
</dbReference>
<dbReference type="Reactome" id="R-DDI-9013148">
    <property type="pathway name" value="CDC42 GTPase cycle"/>
</dbReference>
<dbReference type="Reactome" id="R-DDI-9013149">
    <property type="pathway name" value="RAC1 GTPase cycle"/>
</dbReference>
<dbReference type="Reactome" id="R-DDI-9856530">
    <property type="pathway name" value="High laminar flow shear stress activates signaling by PIEZO1 and PECAM1:CDH5:KDR in endothelial cells"/>
</dbReference>
<dbReference type="PRO" id="PR:P34043"/>
<dbReference type="Proteomes" id="UP000002195">
    <property type="component" value="Chromosome 4"/>
</dbReference>
<dbReference type="GO" id="GO:0005737">
    <property type="term" value="C:cytoplasm"/>
    <property type="evidence" value="ECO:0000318"/>
    <property type="project" value="GO_Central"/>
</dbReference>
<dbReference type="GO" id="GO:0005834">
    <property type="term" value="C:heterotrimeric G-protein complex"/>
    <property type="evidence" value="ECO:0000318"/>
    <property type="project" value="GO_Central"/>
</dbReference>
<dbReference type="GO" id="GO:0001664">
    <property type="term" value="F:G protein-coupled receptor binding"/>
    <property type="evidence" value="ECO:0000318"/>
    <property type="project" value="GO_Central"/>
</dbReference>
<dbReference type="GO" id="GO:0031683">
    <property type="term" value="F:G-protein beta/gamma-subunit complex binding"/>
    <property type="evidence" value="ECO:0000318"/>
    <property type="project" value="GO_Central"/>
</dbReference>
<dbReference type="GO" id="GO:0005525">
    <property type="term" value="F:GTP binding"/>
    <property type="evidence" value="ECO:0007669"/>
    <property type="project" value="UniProtKB-KW"/>
</dbReference>
<dbReference type="GO" id="GO:0003924">
    <property type="term" value="F:GTPase activity"/>
    <property type="evidence" value="ECO:0000318"/>
    <property type="project" value="GO_Central"/>
</dbReference>
<dbReference type="GO" id="GO:0046872">
    <property type="term" value="F:metal ion binding"/>
    <property type="evidence" value="ECO:0007669"/>
    <property type="project" value="UniProtKB-KW"/>
</dbReference>
<dbReference type="GO" id="GO:0007188">
    <property type="term" value="P:adenylate cyclase-modulating G protein-coupled receptor signaling pathway"/>
    <property type="evidence" value="ECO:0000318"/>
    <property type="project" value="GO_Central"/>
</dbReference>
<dbReference type="GO" id="GO:0043326">
    <property type="term" value="P:chemotaxis to folate"/>
    <property type="evidence" value="ECO:0000315"/>
    <property type="project" value="dictyBase"/>
</dbReference>
<dbReference type="GO" id="GO:0007186">
    <property type="term" value="P:G protein-coupled receptor signaling pathway"/>
    <property type="evidence" value="ECO:0000316"/>
    <property type="project" value="dictyBase"/>
</dbReference>
<dbReference type="GO" id="GO:0031157">
    <property type="term" value="P:regulation of aggregate size involved in sorocarp development"/>
    <property type="evidence" value="ECO:0000316"/>
    <property type="project" value="dictyBase"/>
</dbReference>
<dbReference type="GO" id="GO:0009617">
    <property type="term" value="P:response to bacterium"/>
    <property type="evidence" value="ECO:0000314"/>
    <property type="project" value="dictyBase"/>
</dbReference>
<dbReference type="GO" id="GO:0030587">
    <property type="term" value="P:sorocarp development"/>
    <property type="evidence" value="ECO:0000315"/>
    <property type="project" value="dictyBase"/>
</dbReference>
<dbReference type="CDD" id="cd00066">
    <property type="entry name" value="G-alpha"/>
    <property type="match status" value="1"/>
</dbReference>
<dbReference type="FunFam" id="3.40.50.300:FF:000563">
    <property type="entry name" value="Guanine nucleotide-binding protein alpha subunit"/>
    <property type="match status" value="1"/>
</dbReference>
<dbReference type="FunFam" id="1.10.400.10:FF:000007">
    <property type="entry name" value="Guanine nucleotide-binding protein subunit alpha"/>
    <property type="match status" value="1"/>
</dbReference>
<dbReference type="Gene3D" id="1.10.400.10">
    <property type="entry name" value="GI Alpha 1, domain 2-like"/>
    <property type="match status" value="1"/>
</dbReference>
<dbReference type="Gene3D" id="3.40.50.300">
    <property type="entry name" value="P-loop containing nucleotide triphosphate hydrolases"/>
    <property type="match status" value="1"/>
</dbReference>
<dbReference type="InterPro" id="IPR001019">
    <property type="entry name" value="Gprotein_alpha_su"/>
</dbReference>
<dbReference type="InterPro" id="IPR011025">
    <property type="entry name" value="GproteinA_insert"/>
</dbReference>
<dbReference type="InterPro" id="IPR027417">
    <property type="entry name" value="P-loop_NTPase"/>
</dbReference>
<dbReference type="PANTHER" id="PTHR10218">
    <property type="entry name" value="GTP-BINDING PROTEIN ALPHA SUBUNIT"/>
    <property type="match status" value="1"/>
</dbReference>
<dbReference type="PANTHER" id="PTHR10218:SF180">
    <property type="entry name" value="GUANINE NUCLEOTIDE-BINDING PROTEIN ALPHA-4 SUBUNIT-RELATED"/>
    <property type="match status" value="1"/>
</dbReference>
<dbReference type="Pfam" id="PF00503">
    <property type="entry name" value="G-alpha"/>
    <property type="match status" value="1"/>
</dbReference>
<dbReference type="PRINTS" id="PR00318">
    <property type="entry name" value="GPROTEINA"/>
</dbReference>
<dbReference type="SMART" id="SM00275">
    <property type="entry name" value="G_alpha"/>
    <property type="match status" value="1"/>
</dbReference>
<dbReference type="SUPFAM" id="SSF52540">
    <property type="entry name" value="P-loop containing nucleoside triphosphate hydrolases"/>
    <property type="match status" value="1"/>
</dbReference>
<dbReference type="SUPFAM" id="SSF47895">
    <property type="entry name" value="Transducin (alpha subunit), insertion domain"/>
    <property type="match status" value="1"/>
</dbReference>
<dbReference type="PROSITE" id="PS51882">
    <property type="entry name" value="G_ALPHA"/>
    <property type="match status" value="1"/>
</dbReference>
<sequence>MGCILTIEAKKSRDIDYQLRKEEGSKNETKLLLLGPGESGKSTIFKQMKIIQDDGGFSIDERLEYRYIIYGNCISQMKVLVTAAISQDLKPNNPDNETRFEKFSKISPGGNSWTLEIAEDIKQLWSDDSIQNIYRMKDKFYQLNDSAAYFFDNIGRFANENYVPTQDDVLRSRVRTTGIQEAHFKFINIEFRMLDVGGQRSERRKWIHCFDSVTAVIFCVALSEYDQTLREEESQNRMKESLMLFDEIVNSHWFRNTAFIIFFNKVDLFREKIAKIDLGDYFPAYTGGLSFDNSTQFIKKMFLDLSTGNQRIFAHFTCAIDTANIQFVFHAVRETLLKNIFNTIINY</sequence>